<proteinExistence type="predicted"/>
<accession>Q5HJR8</accession>
<feature type="chain" id="PRO_0000194627" description="Uncharacterized HTH-type transcriptional regulator SACOL0084">
    <location>
        <begin position="1"/>
        <end position="745"/>
    </location>
</feature>
<feature type="domain" description="HTH araC/xylS-type" evidence="1">
    <location>
        <begin position="158"/>
        <end position="256"/>
    </location>
</feature>
<feature type="DNA-binding region" description="H-T-H motif" evidence="1">
    <location>
        <begin position="175"/>
        <end position="196"/>
    </location>
</feature>
<feature type="DNA-binding region" description="H-T-H motif" evidence="1">
    <location>
        <begin position="223"/>
        <end position="246"/>
    </location>
</feature>
<evidence type="ECO:0000255" key="1">
    <source>
        <dbReference type="PROSITE-ProRule" id="PRU00593"/>
    </source>
</evidence>
<evidence type="ECO:0000305" key="2"/>
<protein>
    <recommendedName>
        <fullName>Uncharacterized HTH-type transcriptional regulator SACOL0084</fullName>
    </recommendedName>
</protein>
<gene>
    <name type="ordered locus">SACOL0084</name>
</gene>
<dbReference type="EMBL" id="CP000046">
    <property type="protein sequence ID" value="AAW38728.1"/>
    <property type="status" value="ALT_INIT"/>
    <property type="molecule type" value="Genomic_DNA"/>
</dbReference>
<dbReference type="SMR" id="Q5HJR8"/>
<dbReference type="KEGG" id="sac:SACOL0084"/>
<dbReference type="HOGENOM" id="CLU_017624_1_0_9"/>
<dbReference type="Proteomes" id="UP000000530">
    <property type="component" value="Chromosome"/>
</dbReference>
<dbReference type="GO" id="GO:0003700">
    <property type="term" value="F:DNA-binding transcription factor activity"/>
    <property type="evidence" value="ECO:0007669"/>
    <property type="project" value="InterPro"/>
</dbReference>
<dbReference type="GO" id="GO:0043565">
    <property type="term" value="F:sequence-specific DNA binding"/>
    <property type="evidence" value="ECO:0007669"/>
    <property type="project" value="InterPro"/>
</dbReference>
<dbReference type="Gene3D" id="3.20.20.80">
    <property type="entry name" value="Glycosidases"/>
    <property type="match status" value="1"/>
</dbReference>
<dbReference type="Gene3D" id="2.60.40.1500">
    <property type="entry name" value="Glycosyl hydrolase domain, family 39"/>
    <property type="match status" value="1"/>
</dbReference>
<dbReference type="Gene3D" id="1.10.10.60">
    <property type="entry name" value="Homeodomain-like"/>
    <property type="match status" value="2"/>
</dbReference>
<dbReference type="InterPro" id="IPR017853">
    <property type="entry name" value="Glycoside_hydrolase_SF"/>
</dbReference>
<dbReference type="InterPro" id="IPR009057">
    <property type="entry name" value="Homeodomain-like_sf"/>
</dbReference>
<dbReference type="InterPro" id="IPR037923">
    <property type="entry name" value="HTH-like"/>
</dbReference>
<dbReference type="InterPro" id="IPR018060">
    <property type="entry name" value="HTH_AraC"/>
</dbReference>
<dbReference type="InterPro" id="IPR020449">
    <property type="entry name" value="Tscrpt_reg_AraC-type_HTH"/>
</dbReference>
<dbReference type="NCBIfam" id="NF047455">
    <property type="entry name" value="TF_Staph_AryK"/>
    <property type="match status" value="1"/>
</dbReference>
<dbReference type="PANTHER" id="PTHR43280">
    <property type="entry name" value="ARAC-FAMILY TRANSCRIPTIONAL REGULATOR"/>
    <property type="match status" value="1"/>
</dbReference>
<dbReference type="PANTHER" id="PTHR43280:SF28">
    <property type="entry name" value="HTH-TYPE TRANSCRIPTIONAL ACTIVATOR RHAS"/>
    <property type="match status" value="1"/>
</dbReference>
<dbReference type="Pfam" id="PF12833">
    <property type="entry name" value="HTH_18"/>
    <property type="match status" value="1"/>
</dbReference>
<dbReference type="PRINTS" id="PR00032">
    <property type="entry name" value="HTHARAC"/>
</dbReference>
<dbReference type="SMART" id="SM00342">
    <property type="entry name" value="HTH_ARAC"/>
    <property type="match status" value="1"/>
</dbReference>
<dbReference type="SUPFAM" id="SSF51445">
    <property type="entry name" value="(Trans)glycosidases"/>
    <property type="match status" value="1"/>
</dbReference>
<dbReference type="SUPFAM" id="SSF51011">
    <property type="entry name" value="Glycosyl hydrolase domain"/>
    <property type="match status" value="1"/>
</dbReference>
<dbReference type="SUPFAM" id="SSF46689">
    <property type="entry name" value="Homeodomain-like"/>
    <property type="match status" value="2"/>
</dbReference>
<dbReference type="SUPFAM" id="SSF51215">
    <property type="entry name" value="Regulatory protein AraC"/>
    <property type="match status" value="1"/>
</dbReference>
<dbReference type="PROSITE" id="PS01124">
    <property type="entry name" value="HTH_ARAC_FAMILY_2"/>
    <property type="match status" value="1"/>
</dbReference>
<keyword id="KW-0238">DNA-binding</keyword>
<keyword id="KW-0677">Repeat</keyword>
<keyword id="KW-0804">Transcription</keyword>
<keyword id="KW-0805">Transcription regulation</keyword>
<sequence>MQRDYLIRVETESMSDFKRLNSLMIGFVIKGEAHIYDENNMTQCNSGDIFIINHRDLYRFQLQQDGIICYIQFQMKYLADKFDDVHCLYFHLTDATTTKNIHQLRNIMARLVSTHIRHNELSKLTEQQLVIQLLMHMIHYVPRTYHSNQSILNDDKVNQVCDYIELHFHEDLSLSELSEYVGWSESHLSKKFTESLGVGFHHFLNTTRIEHAKLDLTYTDETITDIALQNGFSSAASFARTFKHFTHQTPKQYRGDRPAITENQQSAQHDYHDRELILLLNDYIEEMNHFIEDIEKMNYKEIAFQPTNHQLNQFNHIIQVGYLRNLLNTQYQSQLLTCHHDFQVNEVLAYDVIPYIMKKLNAPFTYDAEISNIFYDIDLCLDFLLDHNFSLTMHLDQYDSRDYIDAFKIFIHHVALHVSHRKDLKFNLYVTTLHTSLIEMIDYFKALFPNGGLYIHLDQATERHLPLLKRLEPHIDHFVFDANSNDAVDFNKMNDDEFKTASQMIINKTNYLIDLMHRHRLKRPLILLNWNTLTGDTFITNGEYFRGGIIIEQLLKLSSKVEGIGYWLNYDLHVSHCKNERDYMNSIELFHQYNGKRPVYFTALLFNKLTSNILYSDDTCIVTGTDSNFQILLYDAKHFNPYLALDNQMNMRATEMIHLNINALEEGMYKIKHFTLDKENGALFNLWRKHHTIHGMDKDSIDYVNRMSFPKLEVYDIDITDTLALNIKMITNGIHLIEVKRYPSS</sequence>
<reference key="1">
    <citation type="journal article" date="2005" name="J. Bacteriol.">
        <title>Insights on evolution of virulence and resistance from the complete genome analysis of an early methicillin-resistant Staphylococcus aureus strain and a biofilm-producing methicillin-resistant Staphylococcus epidermidis strain.</title>
        <authorList>
            <person name="Gill S.R."/>
            <person name="Fouts D.E."/>
            <person name="Archer G.L."/>
            <person name="Mongodin E.F."/>
            <person name="DeBoy R.T."/>
            <person name="Ravel J."/>
            <person name="Paulsen I.T."/>
            <person name="Kolonay J.F."/>
            <person name="Brinkac L.M."/>
            <person name="Beanan M.J."/>
            <person name="Dodson R.J."/>
            <person name="Daugherty S.C."/>
            <person name="Madupu R."/>
            <person name="Angiuoli S.V."/>
            <person name="Durkin A.S."/>
            <person name="Haft D.H."/>
            <person name="Vamathevan J.J."/>
            <person name="Khouri H."/>
            <person name="Utterback T.R."/>
            <person name="Lee C."/>
            <person name="Dimitrov G."/>
            <person name="Jiang L."/>
            <person name="Qin H."/>
            <person name="Weidman J."/>
            <person name="Tran K."/>
            <person name="Kang K.H."/>
            <person name="Hance I.R."/>
            <person name="Nelson K.E."/>
            <person name="Fraser C.M."/>
        </authorList>
    </citation>
    <scope>NUCLEOTIDE SEQUENCE [LARGE SCALE GENOMIC DNA]</scope>
    <source>
        <strain>COL</strain>
    </source>
</reference>
<name>Y084_STAAC</name>
<organism>
    <name type="scientific">Staphylococcus aureus (strain COL)</name>
    <dbReference type="NCBI Taxonomy" id="93062"/>
    <lineage>
        <taxon>Bacteria</taxon>
        <taxon>Bacillati</taxon>
        <taxon>Bacillota</taxon>
        <taxon>Bacilli</taxon>
        <taxon>Bacillales</taxon>
        <taxon>Staphylococcaceae</taxon>
        <taxon>Staphylococcus</taxon>
    </lineage>
</organism>
<comment type="sequence caution" evidence="2">
    <conflict type="erroneous initiation">
        <sequence resource="EMBL-CDS" id="AAW38728"/>
    </conflict>
</comment>